<name>OPGD_ECOBW</name>
<reference key="1">
    <citation type="journal article" date="2009" name="J. Bacteriol.">
        <title>Genomic sequencing reveals regulatory mutations and recombinational events in the widely used MC4100 lineage of Escherichia coli K-12.</title>
        <authorList>
            <person name="Ferenci T."/>
            <person name="Zhou Z."/>
            <person name="Betteridge T."/>
            <person name="Ren Y."/>
            <person name="Liu Y."/>
            <person name="Feng L."/>
            <person name="Reeves P.R."/>
            <person name="Wang L."/>
        </authorList>
    </citation>
    <scope>NUCLEOTIDE SEQUENCE [LARGE SCALE GENOMIC DNA]</scope>
    <source>
        <strain>K12 / MC4100 / BW2952</strain>
    </source>
</reference>
<comment type="function">
    <text evidence="1">Probably involved in the control of the structural glucose backbone of osmoregulated periplasmic glucans (OPGs).</text>
</comment>
<comment type="pathway">
    <text evidence="1">Glycan metabolism; osmoregulated periplasmic glucan (OPG) biosynthesis.</text>
</comment>
<comment type="subcellular location">
    <subcellularLocation>
        <location evidence="1">Periplasm</location>
    </subcellularLocation>
</comment>
<comment type="PTM">
    <text>Predicted to be exported by the Tat system. The position of the signal peptide cleavage has not been experimentally proven.</text>
</comment>
<comment type="similarity">
    <text evidence="1">Belongs to the OpgD/OpgG family.</text>
</comment>
<feature type="signal peptide" description="Tat-type signal" evidence="1">
    <location>
        <begin position="1"/>
        <end position="32"/>
    </location>
</feature>
<feature type="chain" id="PRO_1000213468" description="Glucans biosynthesis protein D">
    <location>
        <begin position="33"/>
        <end position="551"/>
    </location>
</feature>
<sequence>MDRRRFIKGSMAMAAVCGTSGIASLFSQAAFAADSDIADGQTQRFDFSILQSMAHDLAQTAWRGAPRPLPDTLATMTPQAYNSIQYDAEKSLWHNVENRQLDAQFFHMGMGFRRRVRMFSVDPATHLAREIHFRPELFKYNDAGVDTKQLEGQSDLGFAGFRVFKAPELARRDVVSFLGASYFRAVDDTYQYGLSARGLAIDTYTDSKEEFPDFTAFWFDTVKPGATTFTVYALLDSASITGAYKFTIHCEKSQVIMDVENHLYARKDIKQLGIAPMTSMFSCGTNERRMCDTIHPQIHDSDRLSMWRGNGEWICRPLNNPQKLQFNAYTDNNPKGFGLLQLDRDFSHYQDIMGWYNKRPSLWVEPRNKWGKGTIGLMEIPTTGETLDNIVCFWQPEKAVKAGDEFAFQYRLYWSAQPPVHCPLARVMATRTGMGGFSEGWAPGEHYPEKWARRFAVDFVGGDLKAAAPKGIEPVITLSSGEAKQIEILYIEPIDGYRIQFDWYPTSDSTDPVDMRMYLRCQGDAISETWLYQYFPPAPDKRQYVDDRVMS</sequence>
<keyword id="KW-0574">Periplasm</keyword>
<keyword id="KW-0732">Signal</keyword>
<gene>
    <name evidence="1" type="primary">mdoD</name>
    <name evidence="1" type="synonym">opgD</name>
    <name type="ordered locus">BWG_1250</name>
</gene>
<dbReference type="EMBL" id="CP001396">
    <property type="protein sequence ID" value="ACR63300.1"/>
    <property type="molecule type" value="Genomic_DNA"/>
</dbReference>
<dbReference type="RefSeq" id="WP_000375961.1">
    <property type="nucleotide sequence ID" value="NC_012759.1"/>
</dbReference>
<dbReference type="SMR" id="C4ZVG4"/>
<dbReference type="KEGG" id="ebw:BWG_1250"/>
<dbReference type="HOGENOM" id="CLU_023403_2_0_6"/>
<dbReference type="UniPathway" id="UPA00637"/>
<dbReference type="GO" id="GO:0030288">
    <property type="term" value="C:outer membrane-bounded periplasmic space"/>
    <property type="evidence" value="ECO:0007669"/>
    <property type="project" value="TreeGrafter"/>
</dbReference>
<dbReference type="GO" id="GO:0030246">
    <property type="term" value="F:carbohydrate binding"/>
    <property type="evidence" value="ECO:0007669"/>
    <property type="project" value="InterPro"/>
</dbReference>
<dbReference type="GO" id="GO:0003824">
    <property type="term" value="F:catalytic activity"/>
    <property type="evidence" value="ECO:0007669"/>
    <property type="project" value="InterPro"/>
</dbReference>
<dbReference type="GO" id="GO:0051274">
    <property type="term" value="P:beta-glucan biosynthetic process"/>
    <property type="evidence" value="ECO:0007669"/>
    <property type="project" value="TreeGrafter"/>
</dbReference>
<dbReference type="FunFam" id="2.60.40.10:FF:000379">
    <property type="entry name" value="Glucans biosynthesis protein D"/>
    <property type="match status" value="1"/>
</dbReference>
<dbReference type="FunFam" id="2.70.98.10:FF:000004">
    <property type="entry name" value="Glucans biosynthesis protein D"/>
    <property type="match status" value="1"/>
</dbReference>
<dbReference type="Gene3D" id="2.70.98.10">
    <property type="match status" value="1"/>
</dbReference>
<dbReference type="Gene3D" id="2.60.40.10">
    <property type="entry name" value="Immunoglobulins"/>
    <property type="match status" value="1"/>
</dbReference>
<dbReference type="HAMAP" id="MF_01068">
    <property type="entry name" value="MdoD_OpgD"/>
    <property type="match status" value="1"/>
</dbReference>
<dbReference type="InterPro" id="IPR011013">
    <property type="entry name" value="Gal_mutarotase_sf_dom"/>
</dbReference>
<dbReference type="InterPro" id="IPR014718">
    <property type="entry name" value="GH-type_carb-bd"/>
</dbReference>
<dbReference type="InterPro" id="IPR023724">
    <property type="entry name" value="Glucan_biosyn_MdoD"/>
</dbReference>
<dbReference type="InterPro" id="IPR014438">
    <property type="entry name" value="Glucan_biosyn_MdoG/MdoD"/>
</dbReference>
<dbReference type="InterPro" id="IPR007444">
    <property type="entry name" value="Glucan_biosyn_MdoG_C"/>
</dbReference>
<dbReference type="InterPro" id="IPR013783">
    <property type="entry name" value="Ig-like_fold"/>
</dbReference>
<dbReference type="InterPro" id="IPR014756">
    <property type="entry name" value="Ig_E-set"/>
</dbReference>
<dbReference type="InterPro" id="IPR006311">
    <property type="entry name" value="TAT_signal"/>
</dbReference>
<dbReference type="InterPro" id="IPR019546">
    <property type="entry name" value="TAT_signal_bac_arc"/>
</dbReference>
<dbReference type="NCBIfam" id="TIGR01409">
    <property type="entry name" value="TAT_signal_seq"/>
    <property type="match status" value="1"/>
</dbReference>
<dbReference type="PANTHER" id="PTHR30504">
    <property type="entry name" value="GLUCANS BIOSYNTHESIS PROTEIN"/>
    <property type="match status" value="1"/>
</dbReference>
<dbReference type="PANTHER" id="PTHR30504:SF3">
    <property type="entry name" value="GLUCANS BIOSYNTHESIS PROTEIN D"/>
    <property type="match status" value="1"/>
</dbReference>
<dbReference type="Pfam" id="PF04349">
    <property type="entry name" value="MdoG"/>
    <property type="match status" value="1"/>
</dbReference>
<dbReference type="PIRSF" id="PIRSF006281">
    <property type="entry name" value="MdoG"/>
    <property type="match status" value="1"/>
</dbReference>
<dbReference type="SUPFAM" id="SSF81296">
    <property type="entry name" value="E set domains"/>
    <property type="match status" value="1"/>
</dbReference>
<dbReference type="SUPFAM" id="SSF74650">
    <property type="entry name" value="Galactose mutarotase-like"/>
    <property type="match status" value="1"/>
</dbReference>
<dbReference type="PROSITE" id="PS51318">
    <property type="entry name" value="TAT"/>
    <property type="match status" value="1"/>
</dbReference>
<organism>
    <name type="scientific">Escherichia coli (strain K12 / MC4100 / BW2952)</name>
    <dbReference type="NCBI Taxonomy" id="595496"/>
    <lineage>
        <taxon>Bacteria</taxon>
        <taxon>Pseudomonadati</taxon>
        <taxon>Pseudomonadota</taxon>
        <taxon>Gammaproteobacteria</taxon>
        <taxon>Enterobacterales</taxon>
        <taxon>Enterobacteriaceae</taxon>
        <taxon>Escherichia</taxon>
    </lineage>
</organism>
<proteinExistence type="inferred from homology"/>
<accession>C4ZVG4</accession>
<protein>
    <recommendedName>
        <fullName evidence="1">Glucans biosynthesis protein D</fullName>
    </recommendedName>
</protein>
<evidence type="ECO:0000255" key="1">
    <source>
        <dbReference type="HAMAP-Rule" id="MF_01068"/>
    </source>
</evidence>